<reference key="1">
    <citation type="journal article" date="2002" name="Nat. Biotechnol.">
        <title>Genome sequence of the dissimilatory metal ion-reducing bacterium Shewanella oneidensis.</title>
        <authorList>
            <person name="Heidelberg J.F."/>
            <person name="Paulsen I.T."/>
            <person name="Nelson K.E."/>
            <person name="Gaidos E.J."/>
            <person name="Nelson W.C."/>
            <person name="Read T.D."/>
            <person name="Eisen J.A."/>
            <person name="Seshadri R."/>
            <person name="Ward N.L."/>
            <person name="Methe B.A."/>
            <person name="Clayton R.A."/>
            <person name="Meyer T."/>
            <person name="Tsapin A."/>
            <person name="Scott J."/>
            <person name="Beanan M.J."/>
            <person name="Brinkac L.M."/>
            <person name="Daugherty S.C."/>
            <person name="DeBoy R.T."/>
            <person name="Dodson R.J."/>
            <person name="Durkin A.S."/>
            <person name="Haft D.H."/>
            <person name="Kolonay J.F."/>
            <person name="Madupu R."/>
            <person name="Peterson J.D."/>
            <person name="Umayam L.A."/>
            <person name="White O."/>
            <person name="Wolf A.M."/>
            <person name="Vamathevan J.J."/>
            <person name="Weidman J.F."/>
            <person name="Impraim M."/>
            <person name="Lee K."/>
            <person name="Berry K.J."/>
            <person name="Lee C."/>
            <person name="Mueller J."/>
            <person name="Khouri H.M."/>
            <person name="Gill J."/>
            <person name="Utterback T.R."/>
            <person name="McDonald L.A."/>
            <person name="Feldblyum T.V."/>
            <person name="Smith H.O."/>
            <person name="Venter J.C."/>
            <person name="Nealson K.H."/>
            <person name="Fraser C.M."/>
        </authorList>
    </citation>
    <scope>NUCLEOTIDE SEQUENCE [LARGE SCALE GENOMIC DNA]</scope>
    <source>
        <strain>ATCC 700550 / JCM 31522 / CIP 106686 / LMG 19005 / NCIMB 14063 / MR-1</strain>
    </source>
</reference>
<name>PRMC_SHEON</name>
<evidence type="ECO:0000255" key="1">
    <source>
        <dbReference type="HAMAP-Rule" id="MF_02126"/>
    </source>
</evidence>
<accession>Q8EAR4</accession>
<comment type="function">
    <text evidence="1">Methylates the class 1 translation termination release factors RF1/PrfA and RF2/PrfB on the glutamine residue of the universally conserved GGQ motif.</text>
</comment>
<comment type="catalytic activity">
    <reaction evidence="1">
        <text>L-glutaminyl-[peptide chain release factor] + S-adenosyl-L-methionine = N(5)-methyl-L-glutaminyl-[peptide chain release factor] + S-adenosyl-L-homocysteine + H(+)</text>
        <dbReference type="Rhea" id="RHEA:42896"/>
        <dbReference type="Rhea" id="RHEA-COMP:10271"/>
        <dbReference type="Rhea" id="RHEA-COMP:10272"/>
        <dbReference type="ChEBI" id="CHEBI:15378"/>
        <dbReference type="ChEBI" id="CHEBI:30011"/>
        <dbReference type="ChEBI" id="CHEBI:57856"/>
        <dbReference type="ChEBI" id="CHEBI:59789"/>
        <dbReference type="ChEBI" id="CHEBI:61891"/>
        <dbReference type="EC" id="2.1.1.297"/>
    </reaction>
</comment>
<comment type="similarity">
    <text evidence="1">Belongs to the protein N5-glutamine methyltransferase family. PrmC subfamily.</text>
</comment>
<sequence length="286" mass="31997">MADQSCIAEALQWAYVQLAASSESAHLDAEVLLLYCLNKNRAYLYTWPEKALSVEQWKRFQQMVQRRQQGVPVAHIVGEREFWSLPFIVNDTTLIPRPDTEILVESALNLPLESNAKVLDLGTGTGAIALALASERAAWQITAVDKVEDAVALAKANRTNLKLEQVEILQSDWFSAVTSHDFDLIVSNPPYIDEADEHLHQGDVRFEPQSALTAADEGFADLYYIAKTARDYLKPNGYILLEHGFEQAVKLRAKLIELGYQNVATVRDFGSNDRCTMGKWMGLIGI</sequence>
<organism>
    <name type="scientific">Shewanella oneidensis (strain ATCC 700550 / JCM 31522 / CIP 106686 / LMG 19005 / NCIMB 14063 / MR-1)</name>
    <dbReference type="NCBI Taxonomy" id="211586"/>
    <lineage>
        <taxon>Bacteria</taxon>
        <taxon>Pseudomonadati</taxon>
        <taxon>Pseudomonadota</taxon>
        <taxon>Gammaproteobacteria</taxon>
        <taxon>Alteromonadales</taxon>
        <taxon>Shewanellaceae</taxon>
        <taxon>Shewanella</taxon>
    </lineage>
</organism>
<proteinExistence type="inferred from homology"/>
<dbReference type="EC" id="2.1.1.297" evidence="1"/>
<dbReference type="EMBL" id="AE014299">
    <property type="protein sequence ID" value="AAN56809.1"/>
    <property type="molecule type" value="Genomic_DNA"/>
</dbReference>
<dbReference type="RefSeq" id="NP_719365.1">
    <property type="nucleotide sequence ID" value="NC_004347.2"/>
</dbReference>
<dbReference type="RefSeq" id="WP_011073596.1">
    <property type="nucleotide sequence ID" value="NC_004347.2"/>
</dbReference>
<dbReference type="SMR" id="Q8EAR4"/>
<dbReference type="STRING" id="211586.SO_3832"/>
<dbReference type="PaxDb" id="211586-SO_3832"/>
<dbReference type="KEGG" id="son:SO_3832"/>
<dbReference type="PATRIC" id="fig|211586.12.peg.3720"/>
<dbReference type="eggNOG" id="COG2890">
    <property type="taxonomic scope" value="Bacteria"/>
</dbReference>
<dbReference type="HOGENOM" id="CLU_018398_3_0_6"/>
<dbReference type="OrthoDB" id="9800643at2"/>
<dbReference type="PhylomeDB" id="Q8EAR4"/>
<dbReference type="BioCyc" id="SONE211586:G1GMP-3557-MONOMER"/>
<dbReference type="Proteomes" id="UP000008186">
    <property type="component" value="Chromosome"/>
</dbReference>
<dbReference type="GO" id="GO:0003676">
    <property type="term" value="F:nucleic acid binding"/>
    <property type="evidence" value="ECO:0007669"/>
    <property type="project" value="InterPro"/>
</dbReference>
<dbReference type="GO" id="GO:0102559">
    <property type="term" value="F:protein-(glutamine-N5) methyltransferase activity"/>
    <property type="evidence" value="ECO:0007669"/>
    <property type="project" value="UniProtKB-EC"/>
</dbReference>
<dbReference type="GO" id="GO:0036009">
    <property type="term" value="F:protein-glutamine N-methyltransferase activity"/>
    <property type="evidence" value="ECO:0000318"/>
    <property type="project" value="GO_Central"/>
</dbReference>
<dbReference type="GO" id="GO:0032259">
    <property type="term" value="P:methylation"/>
    <property type="evidence" value="ECO:0007669"/>
    <property type="project" value="UniProtKB-KW"/>
</dbReference>
<dbReference type="GO" id="GO:0006415">
    <property type="term" value="P:translational termination"/>
    <property type="evidence" value="ECO:0000318"/>
    <property type="project" value="GO_Central"/>
</dbReference>
<dbReference type="CDD" id="cd02440">
    <property type="entry name" value="AdoMet_MTases"/>
    <property type="match status" value="1"/>
</dbReference>
<dbReference type="FunFam" id="1.10.8.10:FF:000032">
    <property type="entry name" value="Release factor glutamine methyltransferase"/>
    <property type="match status" value="1"/>
</dbReference>
<dbReference type="FunFam" id="3.40.50.150:FF:000053">
    <property type="entry name" value="Release factor glutamine methyltransferase"/>
    <property type="match status" value="1"/>
</dbReference>
<dbReference type="Gene3D" id="1.10.8.10">
    <property type="entry name" value="DNA helicase RuvA subunit, C-terminal domain"/>
    <property type="match status" value="1"/>
</dbReference>
<dbReference type="Gene3D" id="3.40.50.150">
    <property type="entry name" value="Vaccinia Virus protein VP39"/>
    <property type="match status" value="1"/>
</dbReference>
<dbReference type="HAMAP" id="MF_02126">
    <property type="entry name" value="RF_methyltr_PrmC"/>
    <property type="match status" value="1"/>
</dbReference>
<dbReference type="InterPro" id="IPR002052">
    <property type="entry name" value="DNA_methylase_N6_adenine_CS"/>
</dbReference>
<dbReference type="InterPro" id="IPR004556">
    <property type="entry name" value="HemK-like"/>
</dbReference>
<dbReference type="InterPro" id="IPR050320">
    <property type="entry name" value="N5-glutamine_MTase"/>
</dbReference>
<dbReference type="InterPro" id="IPR040758">
    <property type="entry name" value="PrmC_N"/>
</dbReference>
<dbReference type="InterPro" id="IPR019874">
    <property type="entry name" value="RF_methyltr_PrmC"/>
</dbReference>
<dbReference type="InterPro" id="IPR029063">
    <property type="entry name" value="SAM-dependent_MTases_sf"/>
</dbReference>
<dbReference type="InterPro" id="IPR007848">
    <property type="entry name" value="Small_mtfrase_dom"/>
</dbReference>
<dbReference type="NCBIfam" id="TIGR00536">
    <property type="entry name" value="hemK_fam"/>
    <property type="match status" value="1"/>
</dbReference>
<dbReference type="NCBIfam" id="TIGR03534">
    <property type="entry name" value="RF_mod_PrmC"/>
    <property type="match status" value="1"/>
</dbReference>
<dbReference type="PANTHER" id="PTHR18895">
    <property type="entry name" value="HEMK METHYLTRANSFERASE"/>
    <property type="match status" value="1"/>
</dbReference>
<dbReference type="PANTHER" id="PTHR18895:SF74">
    <property type="entry name" value="MTRF1L RELEASE FACTOR GLUTAMINE METHYLTRANSFERASE"/>
    <property type="match status" value="1"/>
</dbReference>
<dbReference type="Pfam" id="PF05175">
    <property type="entry name" value="MTS"/>
    <property type="match status" value="1"/>
</dbReference>
<dbReference type="Pfam" id="PF17827">
    <property type="entry name" value="PrmC_N"/>
    <property type="match status" value="1"/>
</dbReference>
<dbReference type="SUPFAM" id="SSF53335">
    <property type="entry name" value="S-adenosyl-L-methionine-dependent methyltransferases"/>
    <property type="match status" value="1"/>
</dbReference>
<keyword id="KW-0489">Methyltransferase</keyword>
<keyword id="KW-1185">Reference proteome</keyword>
<keyword id="KW-0949">S-adenosyl-L-methionine</keyword>
<keyword id="KW-0808">Transferase</keyword>
<protein>
    <recommendedName>
        <fullName evidence="1">Release factor glutamine methyltransferase</fullName>
        <shortName evidence="1">RF MTase</shortName>
        <ecNumber evidence="1">2.1.1.297</ecNumber>
    </recommendedName>
    <alternativeName>
        <fullName evidence="1">N5-glutamine methyltransferase PrmC</fullName>
    </alternativeName>
    <alternativeName>
        <fullName evidence="1">Protein-(glutamine-N5) MTase PrmC</fullName>
    </alternativeName>
    <alternativeName>
        <fullName evidence="1">Protein-glutamine N-methyltransferase PrmC</fullName>
    </alternativeName>
</protein>
<gene>
    <name evidence="1" type="primary">prmC</name>
    <name type="ordered locus">SO_3832</name>
</gene>
<feature type="chain" id="PRO_0000414541" description="Release factor glutamine methyltransferase">
    <location>
        <begin position="1"/>
        <end position="286"/>
    </location>
</feature>
<feature type="binding site" evidence="1">
    <location>
        <begin position="122"/>
        <end position="126"/>
    </location>
    <ligand>
        <name>S-adenosyl-L-methionine</name>
        <dbReference type="ChEBI" id="CHEBI:59789"/>
    </ligand>
</feature>
<feature type="binding site" evidence="1">
    <location>
        <position position="145"/>
    </location>
    <ligand>
        <name>S-adenosyl-L-methionine</name>
        <dbReference type="ChEBI" id="CHEBI:59789"/>
    </ligand>
</feature>
<feature type="binding site" evidence="1">
    <location>
        <position position="173"/>
    </location>
    <ligand>
        <name>S-adenosyl-L-methionine</name>
        <dbReference type="ChEBI" id="CHEBI:59789"/>
    </ligand>
</feature>
<feature type="binding site" evidence="1">
    <location>
        <begin position="188"/>
        <end position="191"/>
    </location>
    <ligand>
        <name>substrate</name>
    </ligand>
</feature>
<feature type="binding site" evidence="1">
    <location>
        <position position="188"/>
    </location>
    <ligand>
        <name>S-adenosyl-L-methionine</name>
        <dbReference type="ChEBI" id="CHEBI:59789"/>
    </ligand>
</feature>